<reference key="1">
    <citation type="submission" date="2006-05" db="EMBL/GenBank/DDBJ databases">
        <authorList>
            <consortium name="Genoscope"/>
        </authorList>
    </citation>
    <scope>NUCLEOTIDE SEQUENCE [LARGE SCALE GENOMIC DNA]</scope>
    <source>
        <strain>RCC307</strain>
    </source>
</reference>
<evidence type="ECO:0000255" key="1">
    <source>
        <dbReference type="HAMAP-Rule" id="MF_01815"/>
    </source>
</evidence>
<protein>
    <recommendedName>
        <fullName evidence="1">Beta-ketoacyl-[acyl-carrier-protein] synthase III</fullName>
        <shortName evidence="1">Beta-ketoacyl-ACP synthase III</shortName>
        <shortName evidence="1">KAS III</shortName>
        <ecNumber evidence="1">2.3.1.180</ecNumber>
    </recommendedName>
    <alternativeName>
        <fullName evidence="1">3-oxoacyl-[acyl-carrier-protein] synthase 3</fullName>
    </alternativeName>
    <alternativeName>
        <fullName evidence="1">3-oxoacyl-[acyl-carrier-protein] synthase III</fullName>
    </alternativeName>
</protein>
<feature type="chain" id="PRO_1000056435" description="Beta-ketoacyl-[acyl-carrier-protein] synthase III">
    <location>
        <begin position="1"/>
        <end position="333"/>
    </location>
</feature>
<feature type="region of interest" description="ACP-binding" evidence="1">
    <location>
        <begin position="256"/>
        <end position="260"/>
    </location>
</feature>
<feature type="active site" evidence="1">
    <location>
        <position position="112"/>
    </location>
</feature>
<feature type="active site" evidence="1">
    <location>
        <position position="255"/>
    </location>
</feature>
<feature type="active site" evidence="1">
    <location>
        <position position="285"/>
    </location>
</feature>
<name>FABH_SYNR3</name>
<dbReference type="EC" id="2.3.1.180" evidence="1"/>
<dbReference type="EMBL" id="CT978603">
    <property type="protein sequence ID" value="CAK27151.1"/>
    <property type="molecule type" value="Genomic_DNA"/>
</dbReference>
<dbReference type="SMR" id="A5GQJ2"/>
<dbReference type="STRING" id="316278.SynRCC307_0248"/>
<dbReference type="KEGG" id="syr:SynRCC307_0248"/>
<dbReference type="eggNOG" id="COG0332">
    <property type="taxonomic scope" value="Bacteria"/>
</dbReference>
<dbReference type="HOGENOM" id="CLU_039592_0_1_3"/>
<dbReference type="OrthoDB" id="9815506at2"/>
<dbReference type="UniPathway" id="UPA00094"/>
<dbReference type="Proteomes" id="UP000001115">
    <property type="component" value="Chromosome"/>
</dbReference>
<dbReference type="GO" id="GO:0005737">
    <property type="term" value="C:cytoplasm"/>
    <property type="evidence" value="ECO:0007669"/>
    <property type="project" value="UniProtKB-SubCell"/>
</dbReference>
<dbReference type="GO" id="GO:0004315">
    <property type="term" value="F:3-oxoacyl-[acyl-carrier-protein] synthase activity"/>
    <property type="evidence" value="ECO:0007669"/>
    <property type="project" value="InterPro"/>
</dbReference>
<dbReference type="GO" id="GO:0033818">
    <property type="term" value="F:beta-ketoacyl-acyl-carrier-protein synthase III activity"/>
    <property type="evidence" value="ECO:0007669"/>
    <property type="project" value="UniProtKB-UniRule"/>
</dbReference>
<dbReference type="GO" id="GO:0006633">
    <property type="term" value="P:fatty acid biosynthetic process"/>
    <property type="evidence" value="ECO:0007669"/>
    <property type="project" value="UniProtKB-UniRule"/>
</dbReference>
<dbReference type="CDD" id="cd00830">
    <property type="entry name" value="KAS_III"/>
    <property type="match status" value="1"/>
</dbReference>
<dbReference type="FunFam" id="3.40.47.10:FF:000004">
    <property type="entry name" value="3-oxoacyl-[acyl-carrier-protein] synthase 3"/>
    <property type="match status" value="1"/>
</dbReference>
<dbReference type="Gene3D" id="3.40.47.10">
    <property type="match status" value="1"/>
</dbReference>
<dbReference type="HAMAP" id="MF_01815">
    <property type="entry name" value="FabH"/>
    <property type="match status" value="1"/>
</dbReference>
<dbReference type="InterPro" id="IPR013747">
    <property type="entry name" value="ACP_syn_III_C"/>
</dbReference>
<dbReference type="InterPro" id="IPR013751">
    <property type="entry name" value="ACP_syn_III_N"/>
</dbReference>
<dbReference type="InterPro" id="IPR004655">
    <property type="entry name" value="FabH"/>
</dbReference>
<dbReference type="InterPro" id="IPR016039">
    <property type="entry name" value="Thiolase-like"/>
</dbReference>
<dbReference type="NCBIfam" id="TIGR00747">
    <property type="entry name" value="fabH"/>
    <property type="match status" value="1"/>
</dbReference>
<dbReference type="NCBIfam" id="NF006829">
    <property type="entry name" value="PRK09352.1"/>
    <property type="match status" value="1"/>
</dbReference>
<dbReference type="PANTHER" id="PTHR43091">
    <property type="entry name" value="3-OXOACYL-[ACYL-CARRIER-PROTEIN] SYNTHASE"/>
    <property type="match status" value="1"/>
</dbReference>
<dbReference type="PANTHER" id="PTHR43091:SF1">
    <property type="entry name" value="BETA-KETOACYL-[ACYL-CARRIER-PROTEIN] SYNTHASE III, CHLOROPLASTIC"/>
    <property type="match status" value="1"/>
</dbReference>
<dbReference type="Pfam" id="PF08545">
    <property type="entry name" value="ACP_syn_III"/>
    <property type="match status" value="1"/>
</dbReference>
<dbReference type="Pfam" id="PF08541">
    <property type="entry name" value="ACP_syn_III_C"/>
    <property type="match status" value="1"/>
</dbReference>
<dbReference type="SUPFAM" id="SSF53901">
    <property type="entry name" value="Thiolase-like"/>
    <property type="match status" value="1"/>
</dbReference>
<accession>A5GQJ2</accession>
<gene>
    <name evidence="1" type="primary">fabH</name>
    <name type="ordered locus">SynRCC307_0248</name>
</gene>
<proteinExistence type="inferred from homology"/>
<keyword id="KW-0012">Acyltransferase</keyword>
<keyword id="KW-0963">Cytoplasm</keyword>
<keyword id="KW-0275">Fatty acid biosynthesis</keyword>
<keyword id="KW-0276">Fatty acid metabolism</keyword>
<keyword id="KW-0444">Lipid biosynthesis</keyword>
<keyword id="KW-0443">Lipid metabolism</keyword>
<keyword id="KW-0511">Multifunctional enzyme</keyword>
<keyword id="KW-1185">Reference proteome</keyword>
<keyword id="KW-0808">Transferase</keyword>
<sequence>MKGIRLCGSGAAVPRLRISNDDLSGRVETSDEWIRTRTGIAARRVADESESLTSLAAAAGKQALERAGWDASSVDLILLATSSPDDLFGSAPKVQALIGAGSAVAFDLTAACSGFLFSLVTAAQYLRTGAMTRALVIGADQLSRWVDWDDRRSCVLFGDGAGAVAIEACPAENDGLLGFRLNSDGARGDCLTLAQTSERAELLPGMSHQRGGYAPIGMNGQEVYKFAVREVPAILKQLLADTNTEPASIDWLLLHQANQRILDAAAERLGIAADKVLSNLANYGNTSAGTIPLMLHEAVSDGRIQSGQLIASSGFGAGLSWGAALLRWDGPTS</sequence>
<comment type="function">
    <text evidence="1">Catalyzes the condensation reaction of fatty acid synthesis by the addition to an acyl acceptor of two carbons from malonyl-ACP. Catalyzes the first condensation reaction which initiates fatty acid synthesis and may therefore play a role in governing the total rate of fatty acid production. Possesses both acetoacetyl-ACP synthase and acetyl transacylase activities. Its substrate specificity determines the biosynthesis of branched-chain and/or straight-chain of fatty acids.</text>
</comment>
<comment type="catalytic activity">
    <reaction evidence="1">
        <text>malonyl-[ACP] + acetyl-CoA + H(+) = 3-oxobutanoyl-[ACP] + CO2 + CoA</text>
        <dbReference type="Rhea" id="RHEA:12080"/>
        <dbReference type="Rhea" id="RHEA-COMP:9623"/>
        <dbReference type="Rhea" id="RHEA-COMP:9625"/>
        <dbReference type="ChEBI" id="CHEBI:15378"/>
        <dbReference type="ChEBI" id="CHEBI:16526"/>
        <dbReference type="ChEBI" id="CHEBI:57287"/>
        <dbReference type="ChEBI" id="CHEBI:57288"/>
        <dbReference type="ChEBI" id="CHEBI:78449"/>
        <dbReference type="ChEBI" id="CHEBI:78450"/>
        <dbReference type="EC" id="2.3.1.180"/>
    </reaction>
</comment>
<comment type="pathway">
    <text evidence="1">Lipid metabolism; fatty acid biosynthesis.</text>
</comment>
<comment type="subunit">
    <text evidence="1">Homodimer.</text>
</comment>
<comment type="subcellular location">
    <subcellularLocation>
        <location evidence="1">Cytoplasm</location>
    </subcellularLocation>
</comment>
<comment type="domain">
    <text evidence="1">The last Arg residue of the ACP-binding site is essential for the weak association between ACP/AcpP and FabH.</text>
</comment>
<comment type="similarity">
    <text evidence="1">Belongs to the thiolase-like superfamily. FabH family.</text>
</comment>
<organism>
    <name type="scientific">Synechococcus sp. (strain RCC307)</name>
    <dbReference type="NCBI Taxonomy" id="316278"/>
    <lineage>
        <taxon>Bacteria</taxon>
        <taxon>Bacillati</taxon>
        <taxon>Cyanobacteriota</taxon>
        <taxon>Cyanophyceae</taxon>
        <taxon>Synechococcales</taxon>
        <taxon>Synechococcaceae</taxon>
        <taxon>Synechococcus</taxon>
    </lineage>
</organism>